<gene>
    <name type="primary">PPM1N</name>
</gene>
<sequence>MAVLARQLQRLLWTACKKKEREKEGREEEEEEEAGRRAPEGPRSLLTAPRRAQRPHGGAEASGGLRFGASAAQGWRARMEDAHCTWLSLPGLPPGWALFAVLDGHGGARAARFGARHLPGHVLQELGPEPSEPEGVREALRRAFLSADERLRSLWPRVETGGCTAVVLLVSPRFLYLAHCGDSRAVLSRAGAVAFSTEDHRPLRPRERERIHAAGGTIRRRRVEGSLAVSRALGDFTYKEAPGRPPELQLVSAEPEVAALARQAEDEFMLLASDGVWDTVSGAALAGLVASRLRLGLAPELLCAQLLDTCLCKGSLDNMTCILVCFPGAPRPSEEAIRRELALDAALGCRIAELCASAQKPPSLNTVFRTLASEDIPDLPPGGGLDCKATVIAEVYSQICQVSEECGEKGQDGAGKSNPTHLGSALDMEA</sequence>
<feature type="chain" id="PRO_0000349231" description="Probable protein phosphatase 1N">
    <location>
        <begin position="1"/>
        <end position="430"/>
    </location>
</feature>
<feature type="domain" description="PPM-type phosphatase" evidence="2">
    <location>
        <begin position="66"/>
        <end position="326"/>
    </location>
</feature>
<feature type="region of interest" description="Disordered" evidence="3">
    <location>
        <begin position="16"/>
        <end position="65"/>
    </location>
</feature>
<feature type="region of interest" description="Disordered" evidence="3">
    <location>
        <begin position="407"/>
        <end position="430"/>
    </location>
</feature>
<feature type="compositionally biased region" description="Basic and acidic residues" evidence="3">
    <location>
        <begin position="17"/>
        <end position="26"/>
    </location>
</feature>
<feature type="binding site" evidence="1">
    <location>
        <position position="103"/>
    </location>
    <ligand>
        <name>Mn(2+)</name>
        <dbReference type="ChEBI" id="CHEBI:29035"/>
        <label>1</label>
    </ligand>
</feature>
<feature type="binding site" evidence="1">
    <location>
        <position position="103"/>
    </location>
    <ligand>
        <name>Mn(2+)</name>
        <dbReference type="ChEBI" id="CHEBI:29035"/>
        <label>2</label>
    </ligand>
</feature>
<feature type="binding site" evidence="1">
    <location>
        <position position="104"/>
    </location>
    <ligand>
        <name>Mn(2+)</name>
        <dbReference type="ChEBI" id="CHEBI:29035"/>
        <label>1</label>
    </ligand>
</feature>
<feature type="binding site" evidence="1">
    <location>
        <position position="274"/>
    </location>
    <ligand>
        <name>Mn(2+)</name>
        <dbReference type="ChEBI" id="CHEBI:29035"/>
        <label>2</label>
    </ligand>
</feature>
<feature type="binding site" evidence="1">
    <location>
        <position position="317"/>
    </location>
    <ligand>
        <name>Mn(2+)</name>
        <dbReference type="ChEBI" id="CHEBI:29035"/>
        <label>2</label>
    </ligand>
</feature>
<feature type="splice variant" id="VSP_035233" description="In isoform 3." evidence="5">
    <location>
        <begin position="1"/>
        <end position="318"/>
    </location>
</feature>
<feature type="splice variant" id="VSP_035234" description="In isoform 2." evidence="4 5">
    <location>
        <begin position="1"/>
        <end position="78"/>
    </location>
</feature>
<feature type="splice variant" id="VSP_035235" description="In isoform 2." evidence="4 5">
    <original>GSLDNMTCILVCFPGAPRPSEEAIRRELALDAALGCRIAELCASAQKPPSLNTVFRTLASEDIPDLPPGGGLDCKATVIAEVYSQICQVSEECGEKGQDGAGKSNPTHLGSALDMEA</original>
    <variation>VLGAWRGTFGAWCSRGREPRGFGEEGFDREARVKLAKEGIGLKRRAWPEVGRAKIQGRSLRDALRHGRVSGRDLRERAWSFGKGRFWVVGAGPEVLISAGRWKSR</variation>
    <location>
        <begin position="314"/>
        <end position="430"/>
    </location>
</feature>
<name>PPM1N_HUMAN</name>
<keyword id="KW-0025">Alternative splicing</keyword>
<keyword id="KW-0378">Hydrolase</keyword>
<keyword id="KW-0460">Magnesium</keyword>
<keyword id="KW-0464">Manganese</keyword>
<keyword id="KW-0479">Metal-binding</keyword>
<keyword id="KW-0904">Protein phosphatase</keyword>
<keyword id="KW-1185">Reference proteome</keyword>
<accession>Q8N819</accession>
<accession>Q6P662</accession>
<proteinExistence type="evidence at transcript level"/>
<organism>
    <name type="scientific">Homo sapiens</name>
    <name type="common">Human</name>
    <dbReference type="NCBI Taxonomy" id="9606"/>
    <lineage>
        <taxon>Eukaryota</taxon>
        <taxon>Metazoa</taxon>
        <taxon>Chordata</taxon>
        <taxon>Craniata</taxon>
        <taxon>Vertebrata</taxon>
        <taxon>Euteleostomi</taxon>
        <taxon>Mammalia</taxon>
        <taxon>Eutheria</taxon>
        <taxon>Euarchontoglires</taxon>
        <taxon>Primates</taxon>
        <taxon>Haplorrhini</taxon>
        <taxon>Catarrhini</taxon>
        <taxon>Hominidae</taxon>
        <taxon>Homo</taxon>
    </lineage>
</organism>
<evidence type="ECO:0000250" key="1"/>
<evidence type="ECO:0000255" key="2">
    <source>
        <dbReference type="PROSITE-ProRule" id="PRU01082"/>
    </source>
</evidence>
<evidence type="ECO:0000256" key="3">
    <source>
        <dbReference type="SAM" id="MobiDB-lite"/>
    </source>
</evidence>
<evidence type="ECO:0000303" key="4">
    <source>
    </source>
</evidence>
<evidence type="ECO:0000303" key="5">
    <source>
    </source>
</evidence>
<evidence type="ECO:0000305" key="6"/>
<comment type="catalytic activity">
    <reaction>
        <text>O-phospho-L-seryl-[protein] + H2O = L-seryl-[protein] + phosphate</text>
        <dbReference type="Rhea" id="RHEA:20629"/>
        <dbReference type="Rhea" id="RHEA-COMP:9863"/>
        <dbReference type="Rhea" id="RHEA-COMP:11604"/>
        <dbReference type="ChEBI" id="CHEBI:15377"/>
        <dbReference type="ChEBI" id="CHEBI:29999"/>
        <dbReference type="ChEBI" id="CHEBI:43474"/>
        <dbReference type="ChEBI" id="CHEBI:83421"/>
        <dbReference type="EC" id="3.1.3.16"/>
    </reaction>
</comment>
<comment type="catalytic activity">
    <reaction>
        <text>O-phospho-L-threonyl-[protein] + H2O = L-threonyl-[protein] + phosphate</text>
        <dbReference type="Rhea" id="RHEA:47004"/>
        <dbReference type="Rhea" id="RHEA-COMP:11060"/>
        <dbReference type="Rhea" id="RHEA-COMP:11605"/>
        <dbReference type="ChEBI" id="CHEBI:15377"/>
        <dbReference type="ChEBI" id="CHEBI:30013"/>
        <dbReference type="ChEBI" id="CHEBI:43474"/>
        <dbReference type="ChEBI" id="CHEBI:61977"/>
        <dbReference type="EC" id="3.1.3.16"/>
    </reaction>
</comment>
<comment type="cofactor">
    <cofactor evidence="1">
        <name>Mg(2+)</name>
        <dbReference type="ChEBI" id="CHEBI:18420"/>
    </cofactor>
    <cofactor evidence="1">
        <name>Mn(2+)</name>
        <dbReference type="ChEBI" id="CHEBI:29035"/>
    </cofactor>
    <text evidence="1">Binds 2 magnesium or manganese ions per subunit.</text>
</comment>
<comment type="alternative products">
    <event type="alternative splicing"/>
    <isoform>
        <id>Q8N819-1</id>
        <name>1</name>
        <sequence type="displayed"/>
    </isoform>
    <isoform>
        <id>Q8N819-2</id>
        <name>2</name>
        <sequence type="described" ref="VSP_035234 VSP_035235"/>
    </isoform>
    <isoform>
        <id>Q8N819-3</id>
        <name>3</name>
        <sequence type="described" ref="VSP_035233"/>
    </isoform>
</comment>
<comment type="similarity">
    <text evidence="6">Belongs to the PP2C family.</text>
</comment>
<dbReference type="EC" id="3.1.3.16"/>
<dbReference type="EMBL" id="AC138534">
    <property type="status" value="NOT_ANNOTATED_CDS"/>
    <property type="molecule type" value="Genomic_DNA"/>
</dbReference>
<dbReference type="EMBL" id="CH471126">
    <property type="protein sequence ID" value="EAW57360.1"/>
    <property type="molecule type" value="Genomic_DNA"/>
</dbReference>
<dbReference type="EMBL" id="AK097444">
    <property type="protein sequence ID" value="BAC05056.1"/>
    <property type="molecule type" value="mRNA"/>
</dbReference>
<dbReference type="EMBL" id="BC028228">
    <property type="protein sequence ID" value="AAH28228.1"/>
    <property type="molecule type" value="mRNA"/>
</dbReference>
<dbReference type="EMBL" id="BC062452">
    <property type="protein sequence ID" value="AAH62452.1"/>
    <property type="molecule type" value="mRNA"/>
</dbReference>
<dbReference type="CCDS" id="CCDS46115.1">
    <molecule id="Q8N819-1"/>
</dbReference>
<dbReference type="RefSeq" id="NP_001073870.1">
    <molecule id="Q8N819-1"/>
    <property type="nucleotide sequence ID" value="NM_001080401.2"/>
</dbReference>
<dbReference type="SMR" id="Q8N819"/>
<dbReference type="BioGRID" id="127077">
    <property type="interactions" value="2"/>
</dbReference>
<dbReference type="FunCoup" id="Q8N819">
    <property type="interactions" value="122"/>
</dbReference>
<dbReference type="IntAct" id="Q8N819">
    <property type="interactions" value="1"/>
</dbReference>
<dbReference type="STRING" id="9606.ENSP00000397050"/>
<dbReference type="DEPOD" id="PPM1N"/>
<dbReference type="BioMuta" id="PPM1N"/>
<dbReference type="DMDM" id="205829293"/>
<dbReference type="MassIVE" id="Q8N819"/>
<dbReference type="PaxDb" id="9606-ENSP00000397050"/>
<dbReference type="PeptideAtlas" id="Q8N819"/>
<dbReference type="ProteomicsDB" id="72364">
    <molecule id="Q8N819-1"/>
</dbReference>
<dbReference type="ProteomicsDB" id="72365">
    <molecule id="Q8N819-2"/>
</dbReference>
<dbReference type="Antibodypedia" id="31351">
    <property type="antibodies" value="10 antibodies from 6 providers"/>
</dbReference>
<dbReference type="DNASU" id="147699"/>
<dbReference type="Ensembl" id="ENST00000396735.7">
    <molecule id="Q8N819-3"/>
    <property type="protein sequence ID" value="ENSP00000379961.2"/>
    <property type="gene ID" value="ENSG00000213889.12"/>
</dbReference>
<dbReference type="Ensembl" id="ENST00000396737.6">
    <molecule id="Q8N819-3"/>
    <property type="protein sequence ID" value="ENSP00000379963.1"/>
    <property type="gene ID" value="ENSG00000213889.12"/>
</dbReference>
<dbReference type="Ensembl" id="ENST00000401705.5">
    <molecule id="Q8N819-3"/>
    <property type="protein sequence ID" value="ENSP00000384318.1"/>
    <property type="gene ID" value="ENSG00000213889.12"/>
</dbReference>
<dbReference type="Ensembl" id="ENST00000451287.7">
    <molecule id="Q8N819-1"/>
    <property type="protein sequence ID" value="ENSP00000397050.2"/>
    <property type="gene ID" value="ENSG00000213889.12"/>
</dbReference>
<dbReference type="GeneID" id="147699"/>
<dbReference type="KEGG" id="hsa:147699"/>
<dbReference type="MANE-Select" id="ENST00000451287.7">
    <property type="protein sequence ID" value="ENSP00000397050.2"/>
    <property type="RefSeq nucleotide sequence ID" value="NM_001080401.2"/>
    <property type="RefSeq protein sequence ID" value="NP_001073870.1"/>
</dbReference>
<dbReference type="UCSC" id="uc002pce.4">
    <molecule id="Q8N819-1"/>
    <property type="organism name" value="human"/>
</dbReference>
<dbReference type="AGR" id="HGNC:26845"/>
<dbReference type="CTD" id="147699"/>
<dbReference type="DisGeNET" id="147699"/>
<dbReference type="GeneCards" id="PPM1N"/>
<dbReference type="HGNC" id="HGNC:26845">
    <property type="gene designation" value="PPM1N"/>
</dbReference>
<dbReference type="HPA" id="ENSG00000213889">
    <property type="expression patterns" value="Tissue enriched (skeletal)"/>
</dbReference>
<dbReference type="neXtProt" id="NX_Q8N819"/>
<dbReference type="OpenTargets" id="ENSG00000213889"/>
<dbReference type="PharmGKB" id="PA165394107"/>
<dbReference type="VEuPathDB" id="HostDB:ENSG00000213889"/>
<dbReference type="eggNOG" id="KOG0697">
    <property type="taxonomic scope" value="Eukaryota"/>
</dbReference>
<dbReference type="GeneTree" id="ENSGT00940000162694"/>
<dbReference type="HOGENOM" id="CLU_146811_0_0_1"/>
<dbReference type="InParanoid" id="Q8N819"/>
<dbReference type="OMA" id="LWTACKK"/>
<dbReference type="OrthoDB" id="10264738at2759"/>
<dbReference type="PAN-GO" id="Q8N819">
    <property type="GO annotations" value="6 GO annotations based on evolutionary models"/>
</dbReference>
<dbReference type="PhylomeDB" id="Q8N819"/>
<dbReference type="PathwayCommons" id="Q8N819"/>
<dbReference type="SignaLink" id="Q8N819"/>
<dbReference type="BioGRID-ORCS" id="147699">
    <property type="hits" value="12 hits in 1166 CRISPR screens"/>
</dbReference>
<dbReference type="ChiTaRS" id="PPM1N">
    <property type="organism name" value="human"/>
</dbReference>
<dbReference type="GenomeRNAi" id="147699"/>
<dbReference type="Pharos" id="Q8N819">
    <property type="development level" value="Tdark"/>
</dbReference>
<dbReference type="PRO" id="PR:Q8N819"/>
<dbReference type="Proteomes" id="UP000005640">
    <property type="component" value="Chromosome 19"/>
</dbReference>
<dbReference type="RNAct" id="Q8N819">
    <property type="molecule type" value="protein"/>
</dbReference>
<dbReference type="Bgee" id="ENSG00000213889">
    <property type="expression patterns" value="Expressed in male germ line stem cell (sensu Vertebrata) in testis and 95 other cell types or tissues"/>
</dbReference>
<dbReference type="ExpressionAtlas" id="Q8N819">
    <property type="expression patterns" value="baseline and differential"/>
</dbReference>
<dbReference type="GO" id="GO:0005829">
    <property type="term" value="C:cytosol"/>
    <property type="evidence" value="ECO:0000318"/>
    <property type="project" value="GO_Central"/>
</dbReference>
<dbReference type="GO" id="GO:0005634">
    <property type="term" value="C:nucleus"/>
    <property type="evidence" value="ECO:0000318"/>
    <property type="project" value="GO_Central"/>
</dbReference>
<dbReference type="GO" id="GO:0000287">
    <property type="term" value="F:magnesium ion binding"/>
    <property type="evidence" value="ECO:0007669"/>
    <property type="project" value="InterPro"/>
</dbReference>
<dbReference type="GO" id="GO:0030145">
    <property type="term" value="F:manganese ion binding"/>
    <property type="evidence" value="ECO:0007669"/>
    <property type="project" value="InterPro"/>
</dbReference>
<dbReference type="GO" id="GO:0004722">
    <property type="term" value="F:protein serine/threonine phosphatase activity"/>
    <property type="evidence" value="ECO:0000318"/>
    <property type="project" value="GO_Central"/>
</dbReference>
<dbReference type="GO" id="GO:0090263">
    <property type="term" value="P:positive regulation of canonical Wnt signaling pathway"/>
    <property type="evidence" value="ECO:0000318"/>
    <property type="project" value="GO_Central"/>
</dbReference>
<dbReference type="GO" id="GO:0043122">
    <property type="term" value="P:regulation of canonical NF-kappaB signal transduction"/>
    <property type="evidence" value="ECO:0000318"/>
    <property type="project" value="GO_Central"/>
</dbReference>
<dbReference type="CDD" id="cd00143">
    <property type="entry name" value="PP2Cc"/>
    <property type="match status" value="1"/>
</dbReference>
<dbReference type="FunFam" id="3.60.40.10:FF:000048">
    <property type="entry name" value="probable protein phosphatase 1N isoform X1"/>
    <property type="match status" value="1"/>
</dbReference>
<dbReference type="FunFam" id="1.10.10.430:FF:000003">
    <property type="entry name" value="probable protein phosphatase 1N isoform X2"/>
    <property type="match status" value="1"/>
</dbReference>
<dbReference type="Gene3D" id="1.10.10.430">
    <property type="entry name" value="Phosphatase 2C, C-terminal domain suprefamily"/>
    <property type="match status" value="1"/>
</dbReference>
<dbReference type="Gene3D" id="3.60.40.10">
    <property type="entry name" value="PPM-type phosphatase domain"/>
    <property type="match status" value="1"/>
</dbReference>
<dbReference type="InterPro" id="IPR015655">
    <property type="entry name" value="PP2C"/>
</dbReference>
<dbReference type="InterPro" id="IPR012911">
    <property type="entry name" value="PP2C_C"/>
</dbReference>
<dbReference type="InterPro" id="IPR036580">
    <property type="entry name" value="PP2C_C_sf"/>
</dbReference>
<dbReference type="InterPro" id="IPR036457">
    <property type="entry name" value="PPM-type-like_dom_sf"/>
</dbReference>
<dbReference type="InterPro" id="IPR001932">
    <property type="entry name" value="PPM-type_phosphatase-like_dom"/>
</dbReference>
<dbReference type="PANTHER" id="PTHR47992">
    <property type="entry name" value="PROTEIN PHOSPHATASE"/>
    <property type="match status" value="1"/>
</dbReference>
<dbReference type="Pfam" id="PF00481">
    <property type="entry name" value="PP2C"/>
    <property type="match status" value="1"/>
</dbReference>
<dbReference type="Pfam" id="PF07830">
    <property type="entry name" value="PP2C_C"/>
    <property type="match status" value="1"/>
</dbReference>
<dbReference type="SMART" id="SM00332">
    <property type="entry name" value="PP2Cc"/>
    <property type="match status" value="1"/>
</dbReference>
<dbReference type="SUPFAM" id="SSF81606">
    <property type="entry name" value="PP2C-like"/>
    <property type="match status" value="1"/>
</dbReference>
<dbReference type="SUPFAM" id="SSF81601">
    <property type="entry name" value="Protein serine/threonine phosphatase 2C, C-terminal domain"/>
    <property type="match status" value="1"/>
</dbReference>
<dbReference type="PROSITE" id="PS51746">
    <property type="entry name" value="PPM_2"/>
    <property type="match status" value="1"/>
</dbReference>
<protein>
    <recommendedName>
        <fullName>Probable protein phosphatase 1N</fullName>
        <ecNumber>3.1.3.16</ecNumber>
    </recommendedName>
</protein>
<reference key="1">
    <citation type="journal article" date="2004" name="Nature">
        <title>The DNA sequence and biology of human chromosome 19.</title>
        <authorList>
            <person name="Grimwood J."/>
            <person name="Gordon L.A."/>
            <person name="Olsen A.S."/>
            <person name="Terry A."/>
            <person name="Schmutz J."/>
            <person name="Lamerdin J.E."/>
            <person name="Hellsten U."/>
            <person name="Goodstein D."/>
            <person name="Couronne O."/>
            <person name="Tran-Gyamfi M."/>
            <person name="Aerts A."/>
            <person name="Altherr M."/>
            <person name="Ashworth L."/>
            <person name="Bajorek E."/>
            <person name="Black S."/>
            <person name="Branscomb E."/>
            <person name="Caenepeel S."/>
            <person name="Carrano A.V."/>
            <person name="Caoile C."/>
            <person name="Chan Y.M."/>
            <person name="Christensen M."/>
            <person name="Cleland C.A."/>
            <person name="Copeland A."/>
            <person name="Dalin E."/>
            <person name="Dehal P."/>
            <person name="Denys M."/>
            <person name="Detter J.C."/>
            <person name="Escobar J."/>
            <person name="Flowers D."/>
            <person name="Fotopulos D."/>
            <person name="Garcia C."/>
            <person name="Georgescu A.M."/>
            <person name="Glavina T."/>
            <person name="Gomez M."/>
            <person name="Gonzales E."/>
            <person name="Groza M."/>
            <person name="Hammon N."/>
            <person name="Hawkins T."/>
            <person name="Haydu L."/>
            <person name="Ho I."/>
            <person name="Huang W."/>
            <person name="Israni S."/>
            <person name="Jett J."/>
            <person name="Kadner K."/>
            <person name="Kimball H."/>
            <person name="Kobayashi A."/>
            <person name="Larionov V."/>
            <person name="Leem S.-H."/>
            <person name="Lopez F."/>
            <person name="Lou Y."/>
            <person name="Lowry S."/>
            <person name="Malfatti S."/>
            <person name="Martinez D."/>
            <person name="McCready P.M."/>
            <person name="Medina C."/>
            <person name="Morgan J."/>
            <person name="Nelson K."/>
            <person name="Nolan M."/>
            <person name="Ovcharenko I."/>
            <person name="Pitluck S."/>
            <person name="Pollard M."/>
            <person name="Popkie A.P."/>
            <person name="Predki P."/>
            <person name="Quan G."/>
            <person name="Ramirez L."/>
            <person name="Rash S."/>
            <person name="Retterer J."/>
            <person name="Rodriguez A."/>
            <person name="Rogers S."/>
            <person name="Salamov A."/>
            <person name="Salazar A."/>
            <person name="She X."/>
            <person name="Smith D."/>
            <person name="Slezak T."/>
            <person name="Solovyev V."/>
            <person name="Thayer N."/>
            <person name="Tice H."/>
            <person name="Tsai M."/>
            <person name="Ustaszewska A."/>
            <person name="Vo N."/>
            <person name="Wagner M."/>
            <person name="Wheeler J."/>
            <person name="Wu K."/>
            <person name="Xie G."/>
            <person name="Yang J."/>
            <person name="Dubchak I."/>
            <person name="Furey T.S."/>
            <person name="DeJong P."/>
            <person name="Dickson M."/>
            <person name="Gordon D."/>
            <person name="Eichler E.E."/>
            <person name="Pennacchio L.A."/>
            <person name="Richardson P."/>
            <person name="Stubbs L."/>
            <person name="Rokhsar D.S."/>
            <person name="Myers R.M."/>
            <person name="Rubin E.M."/>
            <person name="Lucas S.M."/>
        </authorList>
    </citation>
    <scope>NUCLEOTIDE SEQUENCE [LARGE SCALE GENOMIC DNA]</scope>
</reference>
<reference key="2">
    <citation type="submission" date="2005-07" db="EMBL/GenBank/DDBJ databases">
        <authorList>
            <person name="Mural R.J."/>
            <person name="Istrail S."/>
            <person name="Sutton G.G."/>
            <person name="Florea L."/>
            <person name="Halpern A.L."/>
            <person name="Mobarry C.M."/>
            <person name="Lippert R."/>
            <person name="Walenz B."/>
            <person name="Shatkay H."/>
            <person name="Dew I."/>
            <person name="Miller J.R."/>
            <person name="Flanigan M.J."/>
            <person name="Edwards N.J."/>
            <person name="Bolanos R."/>
            <person name="Fasulo D."/>
            <person name="Halldorsson B.V."/>
            <person name="Hannenhalli S."/>
            <person name="Turner R."/>
            <person name="Yooseph S."/>
            <person name="Lu F."/>
            <person name="Nusskern D.R."/>
            <person name="Shue B.C."/>
            <person name="Zheng X.H."/>
            <person name="Zhong F."/>
            <person name="Delcher A.L."/>
            <person name="Huson D.H."/>
            <person name="Kravitz S.A."/>
            <person name="Mouchard L."/>
            <person name="Reinert K."/>
            <person name="Remington K.A."/>
            <person name="Clark A.G."/>
            <person name="Waterman M.S."/>
            <person name="Eichler E.E."/>
            <person name="Adams M.D."/>
            <person name="Hunkapiller M.W."/>
            <person name="Myers E.W."/>
            <person name="Venter J.C."/>
        </authorList>
    </citation>
    <scope>NUCLEOTIDE SEQUENCE [LARGE SCALE GENOMIC DNA]</scope>
</reference>
<reference key="3">
    <citation type="journal article" date="2004" name="Nat. Genet.">
        <title>Complete sequencing and characterization of 21,243 full-length human cDNAs.</title>
        <authorList>
            <person name="Ota T."/>
            <person name="Suzuki Y."/>
            <person name="Nishikawa T."/>
            <person name="Otsuki T."/>
            <person name="Sugiyama T."/>
            <person name="Irie R."/>
            <person name="Wakamatsu A."/>
            <person name="Hayashi K."/>
            <person name="Sato H."/>
            <person name="Nagai K."/>
            <person name="Kimura K."/>
            <person name="Makita H."/>
            <person name="Sekine M."/>
            <person name="Obayashi M."/>
            <person name="Nishi T."/>
            <person name="Shibahara T."/>
            <person name="Tanaka T."/>
            <person name="Ishii S."/>
            <person name="Yamamoto J."/>
            <person name="Saito K."/>
            <person name="Kawai Y."/>
            <person name="Isono Y."/>
            <person name="Nakamura Y."/>
            <person name="Nagahari K."/>
            <person name="Murakami K."/>
            <person name="Yasuda T."/>
            <person name="Iwayanagi T."/>
            <person name="Wagatsuma M."/>
            <person name="Shiratori A."/>
            <person name="Sudo H."/>
            <person name="Hosoiri T."/>
            <person name="Kaku Y."/>
            <person name="Kodaira H."/>
            <person name="Kondo H."/>
            <person name="Sugawara M."/>
            <person name="Takahashi M."/>
            <person name="Kanda K."/>
            <person name="Yokoi T."/>
            <person name="Furuya T."/>
            <person name="Kikkawa E."/>
            <person name="Omura Y."/>
            <person name="Abe K."/>
            <person name="Kamihara K."/>
            <person name="Katsuta N."/>
            <person name="Sato K."/>
            <person name="Tanikawa M."/>
            <person name="Yamazaki M."/>
            <person name="Ninomiya K."/>
            <person name="Ishibashi T."/>
            <person name="Yamashita H."/>
            <person name="Murakawa K."/>
            <person name="Fujimori K."/>
            <person name="Tanai H."/>
            <person name="Kimata M."/>
            <person name="Watanabe M."/>
            <person name="Hiraoka S."/>
            <person name="Chiba Y."/>
            <person name="Ishida S."/>
            <person name="Ono Y."/>
            <person name="Takiguchi S."/>
            <person name="Watanabe S."/>
            <person name="Yosida M."/>
            <person name="Hotuta T."/>
            <person name="Kusano J."/>
            <person name="Kanehori K."/>
            <person name="Takahashi-Fujii A."/>
            <person name="Hara H."/>
            <person name="Tanase T.-O."/>
            <person name="Nomura Y."/>
            <person name="Togiya S."/>
            <person name="Komai F."/>
            <person name="Hara R."/>
            <person name="Takeuchi K."/>
            <person name="Arita M."/>
            <person name="Imose N."/>
            <person name="Musashino K."/>
            <person name="Yuuki H."/>
            <person name="Oshima A."/>
            <person name="Sasaki N."/>
            <person name="Aotsuka S."/>
            <person name="Yoshikawa Y."/>
            <person name="Matsunawa H."/>
            <person name="Ichihara T."/>
            <person name="Shiohata N."/>
            <person name="Sano S."/>
            <person name="Moriya S."/>
            <person name="Momiyama H."/>
            <person name="Satoh N."/>
            <person name="Takami S."/>
            <person name="Terashima Y."/>
            <person name="Suzuki O."/>
            <person name="Nakagawa S."/>
            <person name="Senoh A."/>
            <person name="Mizoguchi H."/>
            <person name="Goto Y."/>
            <person name="Shimizu F."/>
            <person name="Wakebe H."/>
            <person name="Hishigaki H."/>
            <person name="Watanabe T."/>
            <person name="Sugiyama A."/>
            <person name="Takemoto M."/>
            <person name="Kawakami B."/>
            <person name="Yamazaki M."/>
            <person name="Watanabe K."/>
            <person name="Kumagai A."/>
            <person name="Itakura S."/>
            <person name="Fukuzumi Y."/>
            <person name="Fujimori Y."/>
            <person name="Komiyama M."/>
            <person name="Tashiro H."/>
            <person name="Tanigami A."/>
            <person name="Fujiwara T."/>
            <person name="Ono T."/>
            <person name="Yamada K."/>
            <person name="Fujii Y."/>
            <person name="Ozaki K."/>
            <person name="Hirao M."/>
            <person name="Ohmori Y."/>
            <person name="Kawabata A."/>
            <person name="Hikiji T."/>
            <person name="Kobatake N."/>
            <person name="Inagaki H."/>
            <person name="Ikema Y."/>
            <person name="Okamoto S."/>
            <person name="Okitani R."/>
            <person name="Kawakami T."/>
            <person name="Noguchi S."/>
            <person name="Itoh T."/>
            <person name="Shigeta K."/>
            <person name="Senba T."/>
            <person name="Matsumura K."/>
            <person name="Nakajima Y."/>
            <person name="Mizuno T."/>
            <person name="Morinaga M."/>
            <person name="Sasaki M."/>
            <person name="Togashi T."/>
            <person name="Oyama M."/>
            <person name="Hata H."/>
            <person name="Watanabe M."/>
            <person name="Komatsu T."/>
            <person name="Mizushima-Sugano J."/>
            <person name="Satoh T."/>
            <person name="Shirai Y."/>
            <person name="Takahashi Y."/>
            <person name="Nakagawa K."/>
            <person name="Okumura K."/>
            <person name="Nagase T."/>
            <person name="Nomura N."/>
            <person name="Kikuchi H."/>
            <person name="Masuho Y."/>
            <person name="Yamashita R."/>
            <person name="Nakai K."/>
            <person name="Yada T."/>
            <person name="Nakamura Y."/>
            <person name="Ohara O."/>
            <person name="Isogai T."/>
            <person name="Sugano S."/>
        </authorList>
    </citation>
    <scope>NUCLEOTIDE SEQUENCE [LARGE SCALE MRNA] (ISOFORM 2)</scope>
    <source>
        <tissue>Testis</tissue>
    </source>
</reference>
<reference key="4">
    <citation type="journal article" date="2004" name="Genome Res.">
        <title>The status, quality, and expansion of the NIH full-length cDNA project: the Mammalian Gene Collection (MGC).</title>
        <authorList>
            <consortium name="The MGC Project Team"/>
        </authorList>
    </citation>
    <scope>NUCLEOTIDE SEQUENCE [LARGE SCALE MRNA] (ISOFORMS 2 AND 3)</scope>
    <source>
        <tissue>Brain</tissue>
    </source>
</reference>